<keyword id="KW-0021">Allosteric enzyme</keyword>
<keyword id="KW-0328">Glycosyltransferase</keyword>
<keyword id="KW-0342">GTP-binding</keyword>
<keyword id="KW-0460">Magnesium</keyword>
<keyword id="KW-0547">Nucleotide-binding</keyword>
<keyword id="KW-1185">Reference proteome</keyword>
<keyword id="KW-0808">Transferase</keyword>
<accession>B4EY88</accession>
<comment type="function">
    <text evidence="1">Catalyzes the conversion of uracil and 5-phospho-alpha-D-ribose 1-diphosphate (PRPP) to UMP and diphosphate.</text>
</comment>
<comment type="catalytic activity">
    <reaction evidence="1">
        <text>UMP + diphosphate = 5-phospho-alpha-D-ribose 1-diphosphate + uracil</text>
        <dbReference type="Rhea" id="RHEA:13017"/>
        <dbReference type="ChEBI" id="CHEBI:17568"/>
        <dbReference type="ChEBI" id="CHEBI:33019"/>
        <dbReference type="ChEBI" id="CHEBI:57865"/>
        <dbReference type="ChEBI" id="CHEBI:58017"/>
        <dbReference type="EC" id="2.4.2.9"/>
    </reaction>
</comment>
<comment type="cofactor">
    <cofactor evidence="1">
        <name>Mg(2+)</name>
        <dbReference type="ChEBI" id="CHEBI:18420"/>
    </cofactor>
    <text evidence="1">Binds 1 Mg(2+) ion per subunit. The magnesium is bound as Mg-PRPP.</text>
</comment>
<comment type="activity regulation">
    <text evidence="1">Allosterically activated by GTP.</text>
</comment>
<comment type="pathway">
    <text evidence="1">Pyrimidine metabolism; UMP biosynthesis via salvage pathway; UMP from uracil: step 1/1.</text>
</comment>
<comment type="similarity">
    <text evidence="1">Belongs to the UPRTase family.</text>
</comment>
<evidence type="ECO:0000255" key="1">
    <source>
        <dbReference type="HAMAP-Rule" id="MF_01218"/>
    </source>
</evidence>
<proteinExistence type="inferred from homology"/>
<dbReference type="EC" id="2.4.2.9" evidence="1"/>
<dbReference type="EMBL" id="AM942759">
    <property type="protein sequence ID" value="CAR43298.1"/>
    <property type="molecule type" value="Genomic_DNA"/>
</dbReference>
<dbReference type="RefSeq" id="WP_004248287.1">
    <property type="nucleotide sequence ID" value="NC_010554.1"/>
</dbReference>
<dbReference type="SMR" id="B4EY88"/>
<dbReference type="EnsemblBacteria" id="CAR43298">
    <property type="protein sequence ID" value="CAR43298"/>
    <property type="gene ID" value="PMI1574"/>
</dbReference>
<dbReference type="GeneID" id="6803521"/>
<dbReference type="KEGG" id="pmr:PMI1574"/>
<dbReference type="eggNOG" id="COG0035">
    <property type="taxonomic scope" value="Bacteria"/>
</dbReference>
<dbReference type="HOGENOM" id="CLU_067096_2_2_6"/>
<dbReference type="UniPathway" id="UPA00574">
    <property type="reaction ID" value="UER00636"/>
</dbReference>
<dbReference type="Proteomes" id="UP000008319">
    <property type="component" value="Chromosome"/>
</dbReference>
<dbReference type="GO" id="GO:0005525">
    <property type="term" value="F:GTP binding"/>
    <property type="evidence" value="ECO:0007669"/>
    <property type="project" value="UniProtKB-KW"/>
</dbReference>
<dbReference type="GO" id="GO:0000287">
    <property type="term" value="F:magnesium ion binding"/>
    <property type="evidence" value="ECO:0007669"/>
    <property type="project" value="UniProtKB-UniRule"/>
</dbReference>
<dbReference type="GO" id="GO:0004845">
    <property type="term" value="F:uracil phosphoribosyltransferase activity"/>
    <property type="evidence" value="ECO:0007669"/>
    <property type="project" value="UniProtKB-UniRule"/>
</dbReference>
<dbReference type="GO" id="GO:0044206">
    <property type="term" value="P:UMP salvage"/>
    <property type="evidence" value="ECO:0007669"/>
    <property type="project" value="UniProtKB-UniRule"/>
</dbReference>
<dbReference type="GO" id="GO:0006223">
    <property type="term" value="P:uracil salvage"/>
    <property type="evidence" value="ECO:0007669"/>
    <property type="project" value="InterPro"/>
</dbReference>
<dbReference type="CDD" id="cd06223">
    <property type="entry name" value="PRTases_typeI"/>
    <property type="match status" value="1"/>
</dbReference>
<dbReference type="FunFam" id="3.40.50.2020:FF:000003">
    <property type="entry name" value="Uracil phosphoribosyltransferase"/>
    <property type="match status" value="1"/>
</dbReference>
<dbReference type="Gene3D" id="3.40.50.2020">
    <property type="match status" value="1"/>
</dbReference>
<dbReference type="HAMAP" id="MF_01218_B">
    <property type="entry name" value="Upp_B"/>
    <property type="match status" value="1"/>
</dbReference>
<dbReference type="InterPro" id="IPR000836">
    <property type="entry name" value="PRibTrfase_dom"/>
</dbReference>
<dbReference type="InterPro" id="IPR029057">
    <property type="entry name" value="PRTase-like"/>
</dbReference>
<dbReference type="InterPro" id="IPR034332">
    <property type="entry name" value="Upp_B"/>
</dbReference>
<dbReference type="InterPro" id="IPR050054">
    <property type="entry name" value="UPRTase/APRTase"/>
</dbReference>
<dbReference type="InterPro" id="IPR005765">
    <property type="entry name" value="Ura_phspho_trans"/>
</dbReference>
<dbReference type="NCBIfam" id="NF001097">
    <property type="entry name" value="PRK00129.1"/>
    <property type="match status" value="1"/>
</dbReference>
<dbReference type="NCBIfam" id="TIGR01091">
    <property type="entry name" value="upp"/>
    <property type="match status" value="1"/>
</dbReference>
<dbReference type="PANTHER" id="PTHR32315">
    <property type="entry name" value="ADENINE PHOSPHORIBOSYLTRANSFERASE"/>
    <property type="match status" value="1"/>
</dbReference>
<dbReference type="PANTHER" id="PTHR32315:SF4">
    <property type="entry name" value="URACIL PHOSPHORIBOSYLTRANSFERASE, CHLOROPLASTIC"/>
    <property type="match status" value="1"/>
</dbReference>
<dbReference type="Pfam" id="PF14681">
    <property type="entry name" value="UPRTase"/>
    <property type="match status" value="1"/>
</dbReference>
<dbReference type="SUPFAM" id="SSF53271">
    <property type="entry name" value="PRTase-like"/>
    <property type="match status" value="1"/>
</dbReference>
<reference key="1">
    <citation type="journal article" date="2008" name="J. Bacteriol.">
        <title>Complete genome sequence of uropathogenic Proteus mirabilis, a master of both adherence and motility.</title>
        <authorList>
            <person name="Pearson M.M."/>
            <person name="Sebaihia M."/>
            <person name="Churcher C."/>
            <person name="Quail M.A."/>
            <person name="Seshasayee A.S."/>
            <person name="Luscombe N.M."/>
            <person name="Abdellah Z."/>
            <person name="Arrosmith C."/>
            <person name="Atkin B."/>
            <person name="Chillingworth T."/>
            <person name="Hauser H."/>
            <person name="Jagels K."/>
            <person name="Moule S."/>
            <person name="Mungall K."/>
            <person name="Norbertczak H."/>
            <person name="Rabbinowitsch E."/>
            <person name="Walker D."/>
            <person name="Whithead S."/>
            <person name="Thomson N.R."/>
            <person name="Rather P.N."/>
            <person name="Parkhill J."/>
            <person name="Mobley H.L.T."/>
        </authorList>
    </citation>
    <scope>NUCLEOTIDE SEQUENCE [LARGE SCALE GENOMIC DNA]</scope>
    <source>
        <strain>HI4320</strain>
    </source>
</reference>
<gene>
    <name evidence="1" type="primary">upp</name>
    <name type="ordered locus">PMI1574</name>
</gene>
<protein>
    <recommendedName>
        <fullName evidence="1">Uracil phosphoribosyltransferase</fullName>
        <ecNumber evidence="1">2.4.2.9</ecNumber>
    </recommendedName>
    <alternativeName>
        <fullName evidence="1">UMP pyrophosphorylase</fullName>
    </alternativeName>
    <alternativeName>
        <fullName evidence="1">UPRTase</fullName>
    </alternativeName>
</protein>
<organism>
    <name type="scientific">Proteus mirabilis (strain HI4320)</name>
    <dbReference type="NCBI Taxonomy" id="529507"/>
    <lineage>
        <taxon>Bacteria</taxon>
        <taxon>Pseudomonadati</taxon>
        <taxon>Pseudomonadota</taxon>
        <taxon>Gammaproteobacteria</taxon>
        <taxon>Enterobacterales</taxon>
        <taxon>Morganellaceae</taxon>
        <taxon>Proteus</taxon>
    </lineage>
</organism>
<feature type="chain" id="PRO_1000139147" description="Uracil phosphoribosyltransferase">
    <location>
        <begin position="1"/>
        <end position="208"/>
    </location>
</feature>
<feature type="binding site" evidence="1">
    <location>
        <position position="78"/>
    </location>
    <ligand>
        <name>5-phospho-alpha-D-ribose 1-diphosphate</name>
        <dbReference type="ChEBI" id="CHEBI:58017"/>
    </ligand>
</feature>
<feature type="binding site" evidence="1">
    <location>
        <position position="103"/>
    </location>
    <ligand>
        <name>5-phospho-alpha-D-ribose 1-diphosphate</name>
        <dbReference type="ChEBI" id="CHEBI:58017"/>
    </ligand>
</feature>
<feature type="binding site" evidence="1">
    <location>
        <begin position="130"/>
        <end position="138"/>
    </location>
    <ligand>
        <name>5-phospho-alpha-D-ribose 1-diphosphate</name>
        <dbReference type="ChEBI" id="CHEBI:58017"/>
    </ligand>
</feature>
<feature type="binding site" evidence="1">
    <location>
        <position position="193"/>
    </location>
    <ligand>
        <name>uracil</name>
        <dbReference type="ChEBI" id="CHEBI:17568"/>
    </ligand>
</feature>
<feature type="binding site" evidence="1">
    <location>
        <begin position="198"/>
        <end position="200"/>
    </location>
    <ligand>
        <name>uracil</name>
        <dbReference type="ChEBI" id="CHEBI:17568"/>
    </ligand>
</feature>
<feature type="binding site" evidence="1">
    <location>
        <position position="199"/>
    </location>
    <ligand>
        <name>5-phospho-alpha-D-ribose 1-diphosphate</name>
        <dbReference type="ChEBI" id="CHEBI:58017"/>
    </ligand>
</feature>
<sequence length="208" mass="22697">MKIVEVKHPLIQHKLGLMRDHDISTKRFRELASEVSSLLTYEATADLETETVTIEGWCGPVEIEQIKGKKITVVPILRAGLGMMDGVLENIPSARISVVGVYRDEETLKPVPYFQKLASHIEERMALVVDPMLATGGSMIATIDLLKNSGCTSIKVLVLVAAPEGIKALEEAHPDVELYTASIDKHLNEHGYIVPGLGDAGDKIFGTK</sequence>
<name>UPP_PROMH</name>